<keyword id="KW-1185">Reference proteome</keyword>
<keyword id="KW-0687">Ribonucleoprotein</keyword>
<keyword id="KW-0689">Ribosomal protein</keyword>
<keyword id="KW-0694">RNA-binding</keyword>
<keyword id="KW-0699">rRNA-binding</keyword>
<sequence>MALYEHVFLARQDITPQQVDALVEQYKGVIEANGGKVGRVENWGLKSLTYRIKKNRKAHYVLMDIDAPAPAVHEVERQMRINEDVLRYMTIAVGKHEEGPSAMMQKRDRDDRPRRDGDRPDRGGFGDRGPRPDRGDRDDRPRRPREDRA</sequence>
<accession>Q92QZ7</accession>
<comment type="function">
    <text evidence="1">Binds together with bS18 to 16S ribosomal RNA.</text>
</comment>
<comment type="similarity">
    <text evidence="1">Belongs to the bacterial ribosomal protein bS6 family.</text>
</comment>
<reference key="1">
    <citation type="journal article" date="2001" name="Proc. Natl. Acad. Sci. U.S.A.">
        <title>Analysis of the chromosome sequence of the legume symbiont Sinorhizobium meliloti strain 1021.</title>
        <authorList>
            <person name="Capela D."/>
            <person name="Barloy-Hubler F."/>
            <person name="Gouzy J."/>
            <person name="Bothe G."/>
            <person name="Ampe F."/>
            <person name="Batut J."/>
            <person name="Boistard P."/>
            <person name="Becker A."/>
            <person name="Boutry M."/>
            <person name="Cadieu E."/>
            <person name="Dreano S."/>
            <person name="Gloux S."/>
            <person name="Godrie T."/>
            <person name="Goffeau A."/>
            <person name="Kahn D."/>
            <person name="Kiss E."/>
            <person name="Lelaure V."/>
            <person name="Masuy D."/>
            <person name="Pohl T."/>
            <person name="Portetelle D."/>
            <person name="Puehler A."/>
            <person name="Purnelle B."/>
            <person name="Ramsperger U."/>
            <person name="Renard C."/>
            <person name="Thebault P."/>
            <person name="Vandenbol M."/>
            <person name="Weidner S."/>
            <person name="Galibert F."/>
        </authorList>
    </citation>
    <scope>NUCLEOTIDE SEQUENCE [LARGE SCALE GENOMIC DNA]</scope>
    <source>
        <strain>1021</strain>
    </source>
</reference>
<reference key="2">
    <citation type="journal article" date="2001" name="Science">
        <title>The composite genome of the legume symbiont Sinorhizobium meliloti.</title>
        <authorList>
            <person name="Galibert F."/>
            <person name="Finan T.M."/>
            <person name="Long S.R."/>
            <person name="Puehler A."/>
            <person name="Abola P."/>
            <person name="Ampe F."/>
            <person name="Barloy-Hubler F."/>
            <person name="Barnett M.J."/>
            <person name="Becker A."/>
            <person name="Boistard P."/>
            <person name="Bothe G."/>
            <person name="Boutry M."/>
            <person name="Bowser L."/>
            <person name="Buhrmester J."/>
            <person name="Cadieu E."/>
            <person name="Capela D."/>
            <person name="Chain P."/>
            <person name="Cowie A."/>
            <person name="Davis R.W."/>
            <person name="Dreano S."/>
            <person name="Federspiel N.A."/>
            <person name="Fisher R.F."/>
            <person name="Gloux S."/>
            <person name="Godrie T."/>
            <person name="Goffeau A."/>
            <person name="Golding B."/>
            <person name="Gouzy J."/>
            <person name="Gurjal M."/>
            <person name="Hernandez-Lucas I."/>
            <person name="Hong A."/>
            <person name="Huizar L."/>
            <person name="Hyman R.W."/>
            <person name="Jones T."/>
            <person name="Kahn D."/>
            <person name="Kahn M.L."/>
            <person name="Kalman S."/>
            <person name="Keating D.H."/>
            <person name="Kiss E."/>
            <person name="Komp C."/>
            <person name="Lelaure V."/>
            <person name="Masuy D."/>
            <person name="Palm C."/>
            <person name="Peck M.C."/>
            <person name="Pohl T.M."/>
            <person name="Portetelle D."/>
            <person name="Purnelle B."/>
            <person name="Ramsperger U."/>
            <person name="Surzycki R."/>
            <person name="Thebault P."/>
            <person name="Vandenbol M."/>
            <person name="Vorhoelter F.J."/>
            <person name="Weidner S."/>
            <person name="Wells D.H."/>
            <person name="Wong K."/>
            <person name="Yeh K.-C."/>
            <person name="Batut J."/>
        </authorList>
    </citation>
    <scope>NUCLEOTIDE SEQUENCE [LARGE SCALE GENOMIC DNA]</scope>
    <source>
        <strain>1021</strain>
    </source>
</reference>
<evidence type="ECO:0000255" key="1">
    <source>
        <dbReference type="HAMAP-Rule" id="MF_00360"/>
    </source>
</evidence>
<evidence type="ECO:0000256" key="2">
    <source>
        <dbReference type="SAM" id="MobiDB-lite"/>
    </source>
</evidence>
<evidence type="ECO:0000305" key="3"/>
<protein>
    <recommendedName>
        <fullName evidence="1">Small ribosomal subunit protein bS6</fullName>
    </recommendedName>
    <alternativeName>
        <fullName evidence="3">30S ribosomal protein S6</fullName>
    </alternativeName>
</protein>
<name>RS6_RHIME</name>
<feature type="chain" id="PRO_0000176824" description="Small ribosomal subunit protein bS6">
    <location>
        <begin position="1"/>
        <end position="149"/>
    </location>
</feature>
<feature type="region of interest" description="Disordered" evidence="2">
    <location>
        <begin position="93"/>
        <end position="149"/>
    </location>
</feature>
<feature type="compositionally biased region" description="Basic and acidic residues" evidence="2">
    <location>
        <begin position="94"/>
        <end position="149"/>
    </location>
</feature>
<dbReference type="EMBL" id="AL591688">
    <property type="protein sequence ID" value="CAC45717.1"/>
    <property type="molecule type" value="Genomic_DNA"/>
</dbReference>
<dbReference type="RefSeq" id="NP_385244.1">
    <property type="nucleotide sequence ID" value="NC_003047.1"/>
</dbReference>
<dbReference type="RefSeq" id="WP_003531690.1">
    <property type="nucleotide sequence ID" value="NC_003047.1"/>
</dbReference>
<dbReference type="SMR" id="Q92QZ7"/>
<dbReference type="EnsemblBacteria" id="CAC45717">
    <property type="protein sequence ID" value="CAC45717"/>
    <property type="gene ID" value="SMc00568"/>
</dbReference>
<dbReference type="KEGG" id="sme:SMc00568"/>
<dbReference type="PATRIC" id="fig|266834.11.peg.2547"/>
<dbReference type="eggNOG" id="COG0360">
    <property type="taxonomic scope" value="Bacteria"/>
</dbReference>
<dbReference type="HOGENOM" id="CLU_113441_2_0_5"/>
<dbReference type="OrthoDB" id="9812702at2"/>
<dbReference type="Proteomes" id="UP000001976">
    <property type="component" value="Chromosome"/>
</dbReference>
<dbReference type="GO" id="GO:0022627">
    <property type="term" value="C:cytosolic small ribosomal subunit"/>
    <property type="evidence" value="ECO:0007669"/>
    <property type="project" value="TreeGrafter"/>
</dbReference>
<dbReference type="GO" id="GO:0070181">
    <property type="term" value="F:small ribosomal subunit rRNA binding"/>
    <property type="evidence" value="ECO:0007669"/>
    <property type="project" value="TreeGrafter"/>
</dbReference>
<dbReference type="GO" id="GO:0003735">
    <property type="term" value="F:structural constituent of ribosome"/>
    <property type="evidence" value="ECO:0007669"/>
    <property type="project" value="InterPro"/>
</dbReference>
<dbReference type="GO" id="GO:0006412">
    <property type="term" value="P:translation"/>
    <property type="evidence" value="ECO:0007669"/>
    <property type="project" value="UniProtKB-UniRule"/>
</dbReference>
<dbReference type="CDD" id="cd00473">
    <property type="entry name" value="bS6"/>
    <property type="match status" value="1"/>
</dbReference>
<dbReference type="Gene3D" id="3.30.70.60">
    <property type="match status" value="1"/>
</dbReference>
<dbReference type="HAMAP" id="MF_00360">
    <property type="entry name" value="Ribosomal_bS6"/>
    <property type="match status" value="1"/>
</dbReference>
<dbReference type="InterPro" id="IPR000529">
    <property type="entry name" value="Ribosomal_bS6"/>
</dbReference>
<dbReference type="InterPro" id="IPR035980">
    <property type="entry name" value="Ribosomal_bS6_sf"/>
</dbReference>
<dbReference type="InterPro" id="IPR020814">
    <property type="entry name" value="Ribosomal_S6_plastid/chlpt"/>
</dbReference>
<dbReference type="InterPro" id="IPR014717">
    <property type="entry name" value="Transl_elong_EF1B/ribsomal_bS6"/>
</dbReference>
<dbReference type="NCBIfam" id="TIGR00166">
    <property type="entry name" value="S6"/>
    <property type="match status" value="1"/>
</dbReference>
<dbReference type="PANTHER" id="PTHR21011">
    <property type="entry name" value="MITOCHONDRIAL 28S RIBOSOMAL PROTEIN S6"/>
    <property type="match status" value="1"/>
</dbReference>
<dbReference type="PANTHER" id="PTHR21011:SF1">
    <property type="entry name" value="SMALL RIBOSOMAL SUBUNIT PROTEIN BS6M"/>
    <property type="match status" value="1"/>
</dbReference>
<dbReference type="Pfam" id="PF01250">
    <property type="entry name" value="Ribosomal_S6"/>
    <property type="match status" value="1"/>
</dbReference>
<dbReference type="SUPFAM" id="SSF54995">
    <property type="entry name" value="Ribosomal protein S6"/>
    <property type="match status" value="1"/>
</dbReference>
<proteinExistence type="inferred from homology"/>
<organism>
    <name type="scientific">Rhizobium meliloti (strain 1021)</name>
    <name type="common">Ensifer meliloti</name>
    <name type="synonym">Sinorhizobium meliloti</name>
    <dbReference type="NCBI Taxonomy" id="266834"/>
    <lineage>
        <taxon>Bacteria</taxon>
        <taxon>Pseudomonadati</taxon>
        <taxon>Pseudomonadota</taxon>
        <taxon>Alphaproteobacteria</taxon>
        <taxon>Hyphomicrobiales</taxon>
        <taxon>Rhizobiaceae</taxon>
        <taxon>Sinorhizobium/Ensifer group</taxon>
        <taxon>Sinorhizobium</taxon>
    </lineage>
</organism>
<gene>
    <name evidence="1" type="primary">rpsF</name>
    <name type="ordered locus">R01138</name>
    <name type="ORF">SMc00568</name>
</gene>